<evidence type="ECO:0000255" key="1">
    <source>
        <dbReference type="HAMAP-Rule" id="MF_00505"/>
    </source>
</evidence>
<evidence type="ECO:0000305" key="2"/>
<name>HTPG_HAEI8</name>
<sequence length="626" mass="71193">MSQNQETRGFQSEVKQLLQLMIHSLYSNKEIFLRELISNASDAADKLRFKALSNPALYEGDGDLRVRVSFDADKGTITISDNGIGMTREQVIDHLGTIAKSGTKEFLTALGQDQAKNSQLIGQFGVGFYSAFIVADKVTVKTRAAGEEADKAVLWESAGEGEYSVADIEKKSRGTDVILHLREDEKEFLNEWRLREIIGKYSDHIGLPVEMLTKEYDDEGKECGEKWEKINKSDALWTRSKNDVSDEEYKAFYKHLSHDFVDPVTWAHNKVEGNQAYTSLLYVPAKAPWDLFNREHKHGLKLYVQRVFIMDDAEQFMPNYLRFMRGLIDSNDLPLNVSREILQDNKITAALRKALTKRSLQMLEKLAKDDAEKYLKFWKEFGLVLKEGPAEDFANKETIAKLLRFASTHNDGSEQTVSLEDYILRMKEGQKAIYYITADSYVAAKNSPHLELFNKKGIEVLLLSDRIDEWMLSYLTEFDGKQLQSITKADLDLGDLADKESETQKQQDKAFGSFIERVKNLLGERVKTVRLTHNLTDTPAVVSTDNDQMTTQMAKLFAAAGQPVPEVKYTFELNPEHYLVKKVADIADETEFADWVELLLEQAMLAERGSLENPAAFIKRINKLLG</sequence>
<organism>
    <name type="scientific">Haemophilus influenzae (strain 86-028NP)</name>
    <dbReference type="NCBI Taxonomy" id="281310"/>
    <lineage>
        <taxon>Bacteria</taxon>
        <taxon>Pseudomonadati</taxon>
        <taxon>Pseudomonadota</taxon>
        <taxon>Gammaproteobacteria</taxon>
        <taxon>Pasteurellales</taxon>
        <taxon>Pasteurellaceae</taxon>
        <taxon>Haemophilus</taxon>
    </lineage>
</organism>
<keyword id="KW-0067">ATP-binding</keyword>
<keyword id="KW-0143">Chaperone</keyword>
<keyword id="KW-0963">Cytoplasm</keyword>
<keyword id="KW-0547">Nucleotide-binding</keyword>
<keyword id="KW-0346">Stress response</keyword>
<dbReference type="EMBL" id="CP000057">
    <property type="protein sequence ID" value="AAX87166.1"/>
    <property type="status" value="ALT_INIT"/>
    <property type="molecule type" value="Genomic_DNA"/>
</dbReference>
<dbReference type="RefSeq" id="WP_005687637.1">
    <property type="nucleotide sequence ID" value="NC_007146.2"/>
</dbReference>
<dbReference type="SMR" id="Q4QP81"/>
<dbReference type="GeneID" id="93219029"/>
<dbReference type="KEGG" id="hit:NTHI0185"/>
<dbReference type="HOGENOM" id="CLU_006684_3_0_6"/>
<dbReference type="Proteomes" id="UP000002525">
    <property type="component" value="Chromosome"/>
</dbReference>
<dbReference type="GO" id="GO:0005737">
    <property type="term" value="C:cytoplasm"/>
    <property type="evidence" value="ECO:0007669"/>
    <property type="project" value="UniProtKB-SubCell"/>
</dbReference>
<dbReference type="GO" id="GO:0005524">
    <property type="term" value="F:ATP binding"/>
    <property type="evidence" value="ECO:0007669"/>
    <property type="project" value="UniProtKB-UniRule"/>
</dbReference>
<dbReference type="GO" id="GO:0016887">
    <property type="term" value="F:ATP hydrolysis activity"/>
    <property type="evidence" value="ECO:0007669"/>
    <property type="project" value="InterPro"/>
</dbReference>
<dbReference type="GO" id="GO:0140662">
    <property type="term" value="F:ATP-dependent protein folding chaperone"/>
    <property type="evidence" value="ECO:0007669"/>
    <property type="project" value="InterPro"/>
</dbReference>
<dbReference type="GO" id="GO:0051082">
    <property type="term" value="F:unfolded protein binding"/>
    <property type="evidence" value="ECO:0007669"/>
    <property type="project" value="UniProtKB-UniRule"/>
</dbReference>
<dbReference type="CDD" id="cd16927">
    <property type="entry name" value="HATPase_Hsp90-like"/>
    <property type="match status" value="1"/>
</dbReference>
<dbReference type="FunFam" id="1.20.120.790:FF:000002">
    <property type="entry name" value="Molecular chaperone HtpG"/>
    <property type="match status" value="1"/>
</dbReference>
<dbReference type="FunFam" id="3.30.230.80:FF:000002">
    <property type="entry name" value="Molecular chaperone HtpG"/>
    <property type="match status" value="1"/>
</dbReference>
<dbReference type="FunFam" id="3.30.565.10:FF:000009">
    <property type="entry name" value="Molecular chaperone HtpG"/>
    <property type="match status" value="1"/>
</dbReference>
<dbReference type="FunFam" id="3.40.50.11260:FF:000002">
    <property type="entry name" value="Molecular chaperone HtpG"/>
    <property type="match status" value="1"/>
</dbReference>
<dbReference type="Gene3D" id="3.30.230.80">
    <property type="match status" value="1"/>
</dbReference>
<dbReference type="Gene3D" id="3.40.50.11260">
    <property type="match status" value="1"/>
</dbReference>
<dbReference type="Gene3D" id="1.20.120.790">
    <property type="entry name" value="Heat shock protein 90, C-terminal domain"/>
    <property type="match status" value="1"/>
</dbReference>
<dbReference type="Gene3D" id="3.30.565.10">
    <property type="entry name" value="Histidine kinase-like ATPase, C-terminal domain"/>
    <property type="match status" value="1"/>
</dbReference>
<dbReference type="HAMAP" id="MF_00505">
    <property type="entry name" value="HSP90"/>
    <property type="match status" value="1"/>
</dbReference>
<dbReference type="InterPro" id="IPR036890">
    <property type="entry name" value="HATPase_C_sf"/>
</dbReference>
<dbReference type="InterPro" id="IPR019805">
    <property type="entry name" value="Heat_shock_protein_90_CS"/>
</dbReference>
<dbReference type="InterPro" id="IPR037196">
    <property type="entry name" value="HSP90_C"/>
</dbReference>
<dbReference type="InterPro" id="IPR001404">
    <property type="entry name" value="Hsp90_fam"/>
</dbReference>
<dbReference type="InterPro" id="IPR020575">
    <property type="entry name" value="Hsp90_N"/>
</dbReference>
<dbReference type="InterPro" id="IPR020568">
    <property type="entry name" value="Ribosomal_Su5_D2-typ_SF"/>
</dbReference>
<dbReference type="NCBIfam" id="NF003555">
    <property type="entry name" value="PRK05218.1"/>
    <property type="match status" value="1"/>
</dbReference>
<dbReference type="PANTHER" id="PTHR11528">
    <property type="entry name" value="HEAT SHOCK PROTEIN 90 FAMILY MEMBER"/>
    <property type="match status" value="1"/>
</dbReference>
<dbReference type="Pfam" id="PF13589">
    <property type="entry name" value="HATPase_c_3"/>
    <property type="match status" value="1"/>
</dbReference>
<dbReference type="Pfam" id="PF00183">
    <property type="entry name" value="HSP90"/>
    <property type="match status" value="1"/>
</dbReference>
<dbReference type="PIRSF" id="PIRSF002583">
    <property type="entry name" value="Hsp90"/>
    <property type="match status" value="1"/>
</dbReference>
<dbReference type="PRINTS" id="PR00775">
    <property type="entry name" value="HEATSHOCK90"/>
</dbReference>
<dbReference type="SMART" id="SM00387">
    <property type="entry name" value="HATPase_c"/>
    <property type="match status" value="1"/>
</dbReference>
<dbReference type="SUPFAM" id="SSF55874">
    <property type="entry name" value="ATPase domain of HSP90 chaperone/DNA topoisomerase II/histidine kinase"/>
    <property type="match status" value="1"/>
</dbReference>
<dbReference type="SUPFAM" id="SSF110942">
    <property type="entry name" value="HSP90 C-terminal domain"/>
    <property type="match status" value="1"/>
</dbReference>
<dbReference type="SUPFAM" id="SSF54211">
    <property type="entry name" value="Ribosomal protein S5 domain 2-like"/>
    <property type="match status" value="1"/>
</dbReference>
<dbReference type="PROSITE" id="PS00298">
    <property type="entry name" value="HSP90"/>
    <property type="match status" value="1"/>
</dbReference>
<proteinExistence type="inferred from homology"/>
<reference key="1">
    <citation type="journal article" date="2005" name="J. Bacteriol.">
        <title>Genomic sequence of an otitis media isolate of nontypeable Haemophilus influenzae: comparative study with H. influenzae serotype d, strain KW20.</title>
        <authorList>
            <person name="Harrison A."/>
            <person name="Dyer D.W."/>
            <person name="Gillaspy A."/>
            <person name="Ray W.C."/>
            <person name="Mungur R."/>
            <person name="Carson M.B."/>
            <person name="Zhong H."/>
            <person name="Gipson J."/>
            <person name="Gipson M."/>
            <person name="Johnson L.S."/>
            <person name="Lewis L."/>
            <person name="Bakaletz L.O."/>
            <person name="Munson R.S. Jr."/>
        </authorList>
    </citation>
    <scope>NUCLEOTIDE SEQUENCE [LARGE SCALE GENOMIC DNA]</scope>
    <source>
        <strain>86-028NP</strain>
    </source>
</reference>
<comment type="function">
    <text evidence="1">Molecular chaperone. Has ATPase activity.</text>
</comment>
<comment type="subunit">
    <text evidence="1">Homodimer.</text>
</comment>
<comment type="subcellular location">
    <subcellularLocation>
        <location evidence="1">Cytoplasm</location>
    </subcellularLocation>
</comment>
<comment type="similarity">
    <text evidence="1">Belongs to the heat shock protein 90 family.</text>
</comment>
<comment type="sequence caution" evidence="2">
    <conflict type="erroneous initiation">
        <sequence resource="EMBL-CDS" id="AAX87166"/>
    </conflict>
</comment>
<accession>Q4QP81</accession>
<feature type="chain" id="PRO_0000224210" description="Chaperone protein HtpG">
    <location>
        <begin position="1"/>
        <end position="626"/>
    </location>
</feature>
<feature type="region of interest" description="A; substrate-binding" evidence="1">
    <location>
        <begin position="1"/>
        <end position="339"/>
    </location>
</feature>
<feature type="region of interest" description="B" evidence="1">
    <location>
        <begin position="340"/>
        <end position="555"/>
    </location>
</feature>
<feature type="region of interest" description="C" evidence="1">
    <location>
        <begin position="556"/>
        <end position="626"/>
    </location>
</feature>
<gene>
    <name evidence="1" type="primary">htpG</name>
    <name type="ordered locus">NTHI0185</name>
</gene>
<protein>
    <recommendedName>
        <fullName evidence="1">Chaperone protein HtpG</fullName>
    </recommendedName>
    <alternativeName>
        <fullName evidence="1">Heat shock protein HtpG</fullName>
    </alternativeName>
    <alternativeName>
        <fullName evidence="1">High temperature protein G</fullName>
    </alternativeName>
</protein>